<organism>
    <name type="scientific">Cavia porcellus</name>
    <name type="common">Guinea pig</name>
    <dbReference type="NCBI Taxonomy" id="10141"/>
    <lineage>
        <taxon>Eukaryota</taxon>
        <taxon>Metazoa</taxon>
        <taxon>Chordata</taxon>
        <taxon>Craniata</taxon>
        <taxon>Vertebrata</taxon>
        <taxon>Euteleostomi</taxon>
        <taxon>Mammalia</taxon>
        <taxon>Eutheria</taxon>
        <taxon>Euarchontoglires</taxon>
        <taxon>Glires</taxon>
        <taxon>Rodentia</taxon>
        <taxon>Hystricomorpha</taxon>
        <taxon>Caviidae</taxon>
        <taxon>Cavia</taxon>
    </lineage>
</organism>
<dbReference type="EC" id="3.2.1.21" evidence="7"/>
<dbReference type="EC" id="3.2.1.46" evidence="2"/>
<dbReference type="EC" id="3.2.1.45" evidence="2"/>
<dbReference type="EMBL" id="U50545">
    <property type="protein sequence ID" value="AAB41058.1"/>
    <property type="molecule type" value="mRNA"/>
</dbReference>
<dbReference type="RefSeq" id="NP_001166590.1">
    <property type="nucleotide sequence ID" value="NM_001173119.1"/>
</dbReference>
<dbReference type="SMR" id="P97265"/>
<dbReference type="STRING" id="10141.ENSCPOP00000014554"/>
<dbReference type="CAZy" id="GH1">
    <property type="family name" value="Glycoside Hydrolase Family 1"/>
</dbReference>
<dbReference type="GeneID" id="100379247"/>
<dbReference type="KEGG" id="cpoc:100379247"/>
<dbReference type="CTD" id="57733"/>
<dbReference type="eggNOG" id="KOG0626">
    <property type="taxonomic scope" value="Eukaryota"/>
</dbReference>
<dbReference type="InParanoid" id="P97265"/>
<dbReference type="OrthoDB" id="65569at2759"/>
<dbReference type="Proteomes" id="UP000005447">
    <property type="component" value="Unassembled WGS sequence"/>
</dbReference>
<dbReference type="GO" id="GO:0005829">
    <property type="term" value="C:cytosol"/>
    <property type="evidence" value="ECO:0000250"/>
    <property type="project" value="UniProtKB"/>
</dbReference>
<dbReference type="GO" id="GO:0016020">
    <property type="term" value="C:membrane"/>
    <property type="evidence" value="ECO:0007669"/>
    <property type="project" value="GOC"/>
</dbReference>
<dbReference type="GO" id="GO:0004565">
    <property type="term" value="F:beta-galactosidase activity"/>
    <property type="evidence" value="ECO:0000250"/>
    <property type="project" value="UniProtKB"/>
</dbReference>
<dbReference type="GO" id="GO:0008422">
    <property type="term" value="F:beta-glucosidase activity"/>
    <property type="evidence" value="ECO:0000250"/>
    <property type="project" value="UniProtKB"/>
</dbReference>
<dbReference type="GO" id="GO:0004336">
    <property type="term" value="F:galactosylceramidase activity"/>
    <property type="evidence" value="ECO:0000250"/>
    <property type="project" value="UniProtKB"/>
</dbReference>
<dbReference type="GO" id="GO:0004348">
    <property type="term" value="F:glucosylceramidase activity"/>
    <property type="evidence" value="ECO:0000250"/>
    <property type="project" value="UniProtKB"/>
</dbReference>
<dbReference type="GO" id="GO:0017042">
    <property type="term" value="F:glycosylceramidase activity"/>
    <property type="evidence" value="ECO:0000250"/>
    <property type="project" value="UniProtKB"/>
</dbReference>
<dbReference type="GO" id="GO:1901805">
    <property type="term" value="P:beta-glucoside catabolic process"/>
    <property type="evidence" value="ECO:0000250"/>
    <property type="project" value="UniProtKB"/>
</dbReference>
<dbReference type="GO" id="GO:0005975">
    <property type="term" value="P:carbohydrate metabolic process"/>
    <property type="evidence" value="ECO:0007669"/>
    <property type="project" value="InterPro"/>
</dbReference>
<dbReference type="GO" id="GO:0006683">
    <property type="term" value="P:galactosylceramide catabolic process"/>
    <property type="evidence" value="ECO:0000250"/>
    <property type="project" value="UniProtKB"/>
</dbReference>
<dbReference type="GO" id="GO:0006680">
    <property type="term" value="P:glucosylceramide catabolic process"/>
    <property type="evidence" value="ECO:0000250"/>
    <property type="project" value="UniProtKB"/>
</dbReference>
<dbReference type="FunFam" id="3.20.20.80:FF:000011">
    <property type="entry name" value="Cytosolic beta-glucosidase"/>
    <property type="match status" value="1"/>
</dbReference>
<dbReference type="Gene3D" id="3.20.20.80">
    <property type="entry name" value="Glycosidases"/>
    <property type="match status" value="1"/>
</dbReference>
<dbReference type="InterPro" id="IPR001360">
    <property type="entry name" value="Glyco_hydro_1"/>
</dbReference>
<dbReference type="InterPro" id="IPR017853">
    <property type="entry name" value="Glycoside_hydrolase_SF"/>
</dbReference>
<dbReference type="PANTHER" id="PTHR10353:SF291">
    <property type="entry name" value="CYTOSOLIC BETA-GLUCOSIDASE"/>
    <property type="match status" value="1"/>
</dbReference>
<dbReference type="PANTHER" id="PTHR10353">
    <property type="entry name" value="GLYCOSYL HYDROLASE"/>
    <property type="match status" value="1"/>
</dbReference>
<dbReference type="Pfam" id="PF00232">
    <property type="entry name" value="Glyco_hydro_1"/>
    <property type="match status" value="1"/>
</dbReference>
<dbReference type="PRINTS" id="PR00131">
    <property type="entry name" value="GLHYDRLASE1"/>
</dbReference>
<dbReference type="SUPFAM" id="SSF51445">
    <property type="entry name" value="(Trans)glycosidases"/>
    <property type="match status" value="1"/>
</dbReference>
<name>GBA3_CAVPO</name>
<accession>P97265</accession>
<gene>
    <name evidence="2" type="primary">Gba3</name>
</gene>
<keyword id="KW-0963">Cytoplasm</keyword>
<keyword id="KW-0903">Direct protein sequencing</keyword>
<keyword id="KW-0326">Glycosidase</keyword>
<keyword id="KW-0378">Hydrolase</keyword>
<keyword id="KW-0443">Lipid metabolism</keyword>
<keyword id="KW-1185">Reference proteome</keyword>
<protein>
    <recommendedName>
        <fullName evidence="6">Cytosolic beta-glucosidase</fullName>
        <ecNumber evidence="7">3.2.1.21</ecNumber>
    </recommendedName>
    <alternativeName>
        <fullName evidence="2">Cytosolic galactosylceramidase</fullName>
        <ecNumber evidence="2">3.2.1.46</ecNumber>
    </alternativeName>
    <alternativeName>
        <fullName evidence="2">Cytosolic glucosylceramidase</fullName>
        <ecNumber evidence="2">3.2.1.45</ecNumber>
    </alternativeName>
    <alternativeName>
        <fullName evidence="2">Cytosolic glycosylceramidase</fullName>
        <shortName evidence="2">Cytosolic GCase</shortName>
    </alternativeName>
</protein>
<feature type="chain" id="PRO_0000063907" description="Cytosolic beta-glucosidase">
    <location>
        <begin position="1"/>
        <end position="469"/>
    </location>
</feature>
<feature type="active site" description="Proton donor" evidence="3">
    <location>
        <position position="165"/>
    </location>
</feature>
<feature type="active site" description="Nucleophile" evidence="3">
    <location>
        <position position="373"/>
    </location>
</feature>
<feature type="binding site" evidence="1">
    <location>
        <position position="17"/>
    </location>
    <ligand>
        <name>substrate</name>
    </ligand>
</feature>
<feature type="binding site" evidence="1">
    <location>
        <position position="120"/>
    </location>
    <ligand>
        <name>substrate</name>
    </ligand>
</feature>
<feature type="binding site" evidence="1">
    <location>
        <position position="164"/>
    </location>
    <ligand>
        <name>substrate</name>
    </ligand>
</feature>
<feature type="binding site" evidence="1">
    <location>
        <position position="309"/>
    </location>
    <ligand>
        <name>substrate</name>
    </ligand>
</feature>
<feature type="binding site" evidence="1">
    <location>
        <position position="417"/>
    </location>
    <ligand>
        <name>substrate</name>
    </ligand>
</feature>
<feature type="binding site" evidence="1">
    <location>
        <begin position="424"/>
        <end position="425"/>
    </location>
    <ligand>
        <name>substrate</name>
    </ligand>
</feature>
<comment type="function">
    <text evidence="2 7">Neutral cytosolic beta-glycosidase with a broad substrate specificity that could play a role in the catabolism of glycosylceramides (Probable). Has a significant glucosylceramidase activity in vitro. However, that activity is relatively low and its significance in vivo is not clear (By similarity). Hydrolyzes galactosylceramide/GalCer, glucosylsphingosine/GlcSph and galactosylsphingosine/GalSph. However, the in vivo relevance of these activities is unclear (By similarity). It can also hydrolyze a broad variety of dietary glycosides including phytoestrogens, flavonols, flavones, flavanones and cyanogens in vitro and could therefore play a role in the metabolism of xenobiotics (Probable). Possesses transxylosylase activity in vitro using xylosylated ceramides/XylCers (such as beta-D-xylosyl-(1&lt;-&gt;1')-N-acylsphing-4-enine) as xylosyl donors and cholesterol as acceptor (By similarity). Could also play a role in the catabolism of cytosolic sialyl free N-glycans (By similarity).</text>
</comment>
<comment type="catalytic activity">
    <reaction evidence="7">
        <text>Hydrolysis of terminal, non-reducing beta-D-glucosyl residues with release of beta-D-glucose.</text>
        <dbReference type="EC" id="3.2.1.21"/>
    </reaction>
</comment>
<comment type="catalytic activity">
    <reaction evidence="2">
        <text>a beta-D-glucosyl-(1&lt;-&gt;1')-N-acylsphing-4-enine + H2O = an N-acylsphing-4-enine + D-glucose</text>
        <dbReference type="Rhea" id="RHEA:13269"/>
        <dbReference type="ChEBI" id="CHEBI:4167"/>
        <dbReference type="ChEBI" id="CHEBI:15377"/>
        <dbReference type="ChEBI" id="CHEBI:22801"/>
        <dbReference type="ChEBI" id="CHEBI:52639"/>
        <dbReference type="EC" id="3.2.1.45"/>
    </reaction>
    <physiologicalReaction direction="left-to-right" evidence="2">
        <dbReference type="Rhea" id="RHEA:13270"/>
    </physiologicalReaction>
</comment>
<comment type="catalytic activity">
    <reaction evidence="2">
        <text>a beta-D-galactosyl-(1&lt;-&gt;1')-N-acylsphing-4-enine + H2O = an N-acylsphing-4-enine + D-galactose</text>
        <dbReference type="Rhea" id="RHEA:14297"/>
        <dbReference type="ChEBI" id="CHEBI:4139"/>
        <dbReference type="ChEBI" id="CHEBI:15377"/>
        <dbReference type="ChEBI" id="CHEBI:18390"/>
        <dbReference type="ChEBI" id="CHEBI:52639"/>
        <dbReference type="EC" id="3.2.1.46"/>
    </reaction>
    <physiologicalReaction direction="left-to-right" evidence="2">
        <dbReference type="Rhea" id="RHEA:14298"/>
    </physiologicalReaction>
</comment>
<comment type="catalytic activity">
    <reaction evidence="2">
        <text>beta-D-glucosyl-(1&lt;-&gt;1)-sphing-4-enine + H2O = sphing-4-enine + D-glucose</text>
        <dbReference type="Rhea" id="RHEA:59288"/>
        <dbReference type="ChEBI" id="CHEBI:4167"/>
        <dbReference type="ChEBI" id="CHEBI:15377"/>
        <dbReference type="ChEBI" id="CHEBI:57756"/>
        <dbReference type="ChEBI" id="CHEBI:83992"/>
    </reaction>
    <physiologicalReaction direction="left-to-right" evidence="2">
        <dbReference type="Rhea" id="RHEA:59289"/>
    </physiologicalReaction>
</comment>
<comment type="catalytic activity">
    <reaction evidence="2">
        <text>beta-D-glucosyl-(1&lt;-&gt;1)-N-octadecanoylsphing-4-enine + H2O = N-octadecanoylsphing-4-enine + D-glucose</text>
        <dbReference type="Rhea" id="RHEA:59284"/>
        <dbReference type="ChEBI" id="CHEBI:4167"/>
        <dbReference type="ChEBI" id="CHEBI:15377"/>
        <dbReference type="ChEBI" id="CHEBI:72961"/>
        <dbReference type="ChEBI" id="CHEBI:84719"/>
    </reaction>
    <physiologicalReaction direction="left-to-right" evidence="2">
        <dbReference type="Rhea" id="RHEA:59285"/>
    </physiologicalReaction>
</comment>
<comment type="catalytic activity">
    <reaction evidence="2">
        <text>beta-D-galactosyl-(1&lt;-&gt;1)-sphing-4-enine + H2O = sphing-4-enine + D-galactose</text>
        <dbReference type="Rhea" id="RHEA:43908"/>
        <dbReference type="ChEBI" id="CHEBI:4139"/>
        <dbReference type="ChEBI" id="CHEBI:15377"/>
        <dbReference type="ChEBI" id="CHEBI:57756"/>
        <dbReference type="ChEBI" id="CHEBI:57934"/>
    </reaction>
    <physiologicalReaction direction="left-to-right" evidence="2">
        <dbReference type="Rhea" id="RHEA:43909"/>
    </physiologicalReaction>
</comment>
<comment type="catalytic activity">
    <reaction evidence="2">
        <text>beta-D-galactosyl-(1&lt;-&gt;1')-N-octadecanoylsphing-4-enine + H2O = N-octadecanoylsphing-4-enine + D-galactose</text>
        <dbReference type="Rhea" id="RHEA:59292"/>
        <dbReference type="ChEBI" id="CHEBI:4139"/>
        <dbReference type="ChEBI" id="CHEBI:15377"/>
        <dbReference type="ChEBI" id="CHEBI:72961"/>
        <dbReference type="ChEBI" id="CHEBI:84720"/>
    </reaction>
    <physiologicalReaction direction="left-to-right" evidence="2">
        <dbReference type="Rhea" id="RHEA:59293"/>
    </physiologicalReaction>
</comment>
<comment type="catalytic activity">
    <reaction evidence="2">
        <text>a beta-D-xylosyl-(1&lt;-&gt;1')-N-acylsphing-4-enine + cholesterol = cholesteryl 3-beta-D-xyloside + an N-acylsphing-4-enine</text>
        <dbReference type="Rhea" id="RHEA:70239"/>
        <dbReference type="ChEBI" id="CHEBI:16113"/>
        <dbReference type="ChEBI" id="CHEBI:52639"/>
        <dbReference type="ChEBI" id="CHEBI:189067"/>
        <dbReference type="ChEBI" id="CHEBI:189068"/>
    </reaction>
    <physiologicalReaction direction="left-to-right" evidence="2">
        <dbReference type="Rhea" id="RHEA:70240"/>
    </physiologicalReaction>
    <physiologicalReaction direction="right-to-left" evidence="2">
        <dbReference type="Rhea" id="RHEA:70241"/>
    </physiologicalReaction>
</comment>
<comment type="activity regulation">
    <text evidence="5">Inhibited by 2,4-dinitrophenyl-2-fluoro-2-deoxy-beta-D-glucopyranoside.</text>
</comment>
<comment type="subcellular location">
    <subcellularLocation>
        <location evidence="7">Cytoplasm</location>
        <location evidence="7">Cytosol</location>
    </subcellularLocation>
</comment>
<comment type="tissue specificity">
    <text evidence="7">Present in hepatocytes (at protein level).</text>
</comment>
<comment type="PTM">
    <text evidence="4">The N-terminus is blocked.</text>
</comment>
<comment type="similarity">
    <text evidence="6">Belongs to the glycosyl hydrolase 1 family. Klotho subfamily.</text>
</comment>
<evidence type="ECO:0000250" key="1"/>
<evidence type="ECO:0000250" key="2">
    <source>
        <dbReference type="UniProtKB" id="Q9H227"/>
    </source>
</evidence>
<evidence type="ECO:0000255" key="3"/>
<evidence type="ECO:0000269" key="4">
    <source>
    </source>
</evidence>
<evidence type="ECO:0000269" key="5">
    <source>
    </source>
</evidence>
<evidence type="ECO:0000305" key="6"/>
<evidence type="ECO:0000305" key="7">
    <source>
    </source>
</evidence>
<sequence>MAFPADLVGGLPTAAYQVEGGWDADGRGPCVWDTFTHQGGERVFKNQTGDVACGSYTLWEEDLKCIKQLGLTHYRFSISWSRLLPDGTTGFINQKGVDYYNKIIDDLLTNGVTPVVTLYHFDLPQALEDQGGWLSEAIIEVFDKYAQFCFSTFGNRVRQWITINEPNVLCAMGYDLGFFAPGVSQIGTGGYQAAHNMIKAHARAWHSYDSLFREKQKGMVSLSLFCIWPQPENPNSVLDQKAAERAINFQFDFFAKPIFIDGDYPELVKSQIASMSEKQGYPSSRLSKFTEEEKKMIKGTADFFAVQYYTTRFIRHKENKEAELGILQDAEIELFSDPSWKGVGWVRVVPWGIRKLLNYIKDTYNNPVIYITENGFPQDDPPSIDDTQRWECFRQTFEELFKAIHVDKVNLQLYCAWSLLDNFEWNDGYSKRFGLFHVDFEDPAKPRVPYTSAKEYAKIIRNNGLERPQ</sequence>
<reference key="1">
    <citation type="journal article" date="1996" name="Biochem. J.">
        <title>Primary structure of the cytosolic beta-glucosidase of guinea pig liver.</title>
        <authorList>
            <person name="Hays W.S."/>
            <person name="Jenison S.A."/>
            <person name="Yamada T."/>
            <person name="Pastuszyn A."/>
            <person name="Glew R.H."/>
        </authorList>
    </citation>
    <scope>NUCLEOTIDE SEQUENCE [MRNA]</scope>
    <scope>PROTEIN SEQUENCE OF 28-41; 46-59; 76-82; 96-102; 204-212; 218-232; 246-260; 270-274; 299-310; 321-335; 390-394 AND 448-454</scope>
    <scope>BLOCKAGE OF N-TERMINUS</scope>
    <source>
        <strain>Dunkin-Hartley</strain>
        <tissue>Liver</tissue>
    </source>
</reference>
<reference key="2">
    <citation type="journal article" date="1998" name="Hepatology">
        <title>Expression of cytosolic beta-glucosidase in guinea pig liver cells.</title>
        <authorList>
            <person name="Hays W.S."/>
            <person name="Wheeler D.E."/>
            <person name="Eghtesad B."/>
            <person name="Glew R.H."/>
            <person name="Johnston D.E."/>
        </authorList>
    </citation>
    <scope>FUNCTION</scope>
    <scope>CATALYTIC ACTIVITY</scope>
    <scope>SUBCELLULAR LOCATION</scope>
    <scope>TISSUE SPECIFICITY</scope>
    <scope>ACTIVITY REGULATION</scope>
</reference>
<proteinExistence type="evidence at protein level"/>